<feature type="chain" id="PRO_0000241398" description="Large ribosomal subunit protein uL3">
    <location>
        <begin position="1"/>
        <end position="228"/>
    </location>
</feature>
<feature type="region of interest" description="Disordered" evidence="2">
    <location>
        <begin position="135"/>
        <end position="159"/>
    </location>
</feature>
<feature type="compositionally biased region" description="Polar residues" evidence="2">
    <location>
        <begin position="140"/>
        <end position="150"/>
    </location>
</feature>
<feature type="modified residue" description="N5-methylglutamine" evidence="1">
    <location>
        <position position="158"/>
    </location>
</feature>
<gene>
    <name evidence="1" type="primary">rplC</name>
    <name type="ordered locus">Rfer_3795</name>
</gene>
<proteinExistence type="inferred from homology"/>
<accession>Q21RV8</accession>
<dbReference type="EMBL" id="CP000267">
    <property type="protein sequence ID" value="ABD71495.1"/>
    <property type="molecule type" value="Genomic_DNA"/>
</dbReference>
<dbReference type="RefSeq" id="WP_011466058.1">
    <property type="nucleotide sequence ID" value="NC_007908.1"/>
</dbReference>
<dbReference type="SMR" id="Q21RV8"/>
<dbReference type="STRING" id="338969.Rfer_3795"/>
<dbReference type="KEGG" id="rfr:Rfer_3795"/>
<dbReference type="eggNOG" id="COG0087">
    <property type="taxonomic scope" value="Bacteria"/>
</dbReference>
<dbReference type="HOGENOM" id="CLU_044142_4_1_4"/>
<dbReference type="OrthoDB" id="9806135at2"/>
<dbReference type="Proteomes" id="UP000008332">
    <property type="component" value="Chromosome"/>
</dbReference>
<dbReference type="GO" id="GO:0022625">
    <property type="term" value="C:cytosolic large ribosomal subunit"/>
    <property type="evidence" value="ECO:0007669"/>
    <property type="project" value="TreeGrafter"/>
</dbReference>
<dbReference type="GO" id="GO:0019843">
    <property type="term" value="F:rRNA binding"/>
    <property type="evidence" value="ECO:0007669"/>
    <property type="project" value="UniProtKB-UniRule"/>
</dbReference>
<dbReference type="GO" id="GO:0003735">
    <property type="term" value="F:structural constituent of ribosome"/>
    <property type="evidence" value="ECO:0007669"/>
    <property type="project" value="InterPro"/>
</dbReference>
<dbReference type="GO" id="GO:0006412">
    <property type="term" value="P:translation"/>
    <property type="evidence" value="ECO:0007669"/>
    <property type="project" value="UniProtKB-UniRule"/>
</dbReference>
<dbReference type="FunFam" id="2.40.30.10:FF:000004">
    <property type="entry name" value="50S ribosomal protein L3"/>
    <property type="match status" value="1"/>
</dbReference>
<dbReference type="FunFam" id="3.30.160.810:FF:000001">
    <property type="entry name" value="50S ribosomal protein L3"/>
    <property type="match status" value="1"/>
</dbReference>
<dbReference type="Gene3D" id="3.30.160.810">
    <property type="match status" value="1"/>
</dbReference>
<dbReference type="Gene3D" id="2.40.30.10">
    <property type="entry name" value="Translation factors"/>
    <property type="match status" value="1"/>
</dbReference>
<dbReference type="HAMAP" id="MF_01325_B">
    <property type="entry name" value="Ribosomal_uL3_B"/>
    <property type="match status" value="1"/>
</dbReference>
<dbReference type="InterPro" id="IPR000597">
    <property type="entry name" value="Ribosomal_uL3"/>
</dbReference>
<dbReference type="InterPro" id="IPR019927">
    <property type="entry name" value="Ribosomal_uL3_bac/org-type"/>
</dbReference>
<dbReference type="InterPro" id="IPR019926">
    <property type="entry name" value="Ribosomal_uL3_CS"/>
</dbReference>
<dbReference type="InterPro" id="IPR009000">
    <property type="entry name" value="Transl_B-barrel_sf"/>
</dbReference>
<dbReference type="NCBIfam" id="TIGR03625">
    <property type="entry name" value="L3_bact"/>
    <property type="match status" value="1"/>
</dbReference>
<dbReference type="PANTHER" id="PTHR11229">
    <property type="entry name" value="50S RIBOSOMAL PROTEIN L3"/>
    <property type="match status" value="1"/>
</dbReference>
<dbReference type="PANTHER" id="PTHR11229:SF16">
    <property type="entry name" value="LARGE RIBOSOMAL SUBUNIT PROTEIN UL3C"/>
    <property type="match status" value="1"/>
</dbReference>
<dbReference type="Pfam" id="PF00297">
    <property type="entry name" value="Ribosomal_L3"/>
    <property type="match status" value="1"/>
</dbReference>
<dbReference type="SUPFAM" id="SSF50447">
    <property type="entry name" value="Translation proteins"/>
    <property type="match status" value="1"/>
</dbReference>
<dbReference type="PROSITE" id="PS00474">
    <property type="entry name" value="RIBOSOMAL_L3"/>
    <property type="match status" value="1"/>
</dbReference>
<sequence>MSLSNSLGLLGRKVGMMRLFTDEGDSIPVTVVDVSNNRVTQVKTQENDGYVALQVTFGARKASRVTKPAAGHLAKAGVEAGEIIREFRLTADVAAQYKAGATVPVTAVFAVGQKVDVQGTTIGKGFAGTIKRHHMKSQRASHGNSRSHNVPGSIGMAQDPGRVFPGKRMTGHLGDDTVTTQNLDVIRIDEARQLLMIKGAVPGSAGGFVTVRPAVKVKANNTDVKGAN</sequence>
<name>RL3_ALBFT</name>
<evidence type="ECO:0000255" key="1">
    <source>
        <dbReference type="HAMAP-Rule" id="MF_01325"/>
    </source>
</evidence>
<evidence type="ECO:0000256" key="2">
    <source>
        <dbReference type="SAM" id="MobiDB-lite"/>
    </source>
</evidence>
<evidence type="ECO:0000305" key="3"/>
<comment type="function">
    <text evidence="1">One of the primary rRNA binding proteins, it binds directly near the 3'-end of the 23S rRNA, where it nucleates assembly of the 50S subunit.</text>
</comment>
<comment type="subunit">
    <text evidence="1">Part of the 50S ribosomal subunit. Forms a cluster with proteins L14 and L19.</text>
</comment>
<comment type="PTM">
    <text evidence="1">Methylated by PrmB.</text>
</comment>
<comment type="similarity">
    <text evidence="1">Belongs to the universal ribosomal protein uL3 family.</text>
</comment>
<reference key="1">
    <citation type="submission" date="2006-02" db="EMBL/GenBank/DDBJ databases">
        <title>Complete sequence of chromosome of Rhodoferax ferrireducens DSM 15236.</title>
        <authorList>
            <person name="Copeland A."/>
            <person name="Lucas S."/>
            <person name="Lapidus A."/>
            <person name="Barry K."/>
            <person name="Detter J.C."/>
            <person name="Glavina del Rio T."/>
            <person name="Hammon N."/>
            <person name="Israni S."/>
            <person name="Pitluck S."/>
            <person name="Brettin T."/>
            <person name="Bruce D."/>
            <person name="Han C."/>
            <person name="Tapia R."/>
            <person name="Gilna P."/>
            <person name="Kiss H."/>
            <person name="Schmutz J."/>
            <person name="Larimer F."/>
            <person name="Land M."/>
            <person name="Kyrpides N."/>
            <person name="Ivanova N."/>
            <person name="Richardson P."/>
        </authorList>
    </citation>
    <scope>NUCLEOTIDE SEQUENCE [LARGE SCALE GENOMIC DNA]</scope>
    <source>
        <strain>ATCC BAA-621 / DSM 15236 / T118</strain>
    </source>
</reference>
<protein>
    <recommendedName>
        <fullName evidence="1">Large ribosomal subunit protein uL3</fullName>
    </recommendedName>
    <alternativeName>
        <fullName evidence="3">50S ribosomal protein L3</fullName>
    </alternativeName>
</protein>
<keyword id="KW-0488">Methylation</keyword>
<keyword id="KW-1185">Reference proteome</keyword>
<keyword id="KW-0687">Ribonucleoprotein</keyword>
<keyword id="KW-0689">Ribosomal protein</keyword>
<keyword id="KW-0694">RNA-binding</keyword>
<keyword id="KW-0699">rRNA-binding</keyword>
<organism>
    <name type="scientific">Albidiferax ferrireducens (strain ATCC BAA-621 / DSM 15236 / T118)</name>
    <name type="common">Rhodoferax ferrireducens</name>
    <dbReference type="NCBI Taxonomy" id="338969"/>
    <lineage>
        <taxon>Bacteria</taxon>
        <taxon>Pseudomonadati</taxon>
        <taxon>Pseudomonadota</taxon>
        <taxon>Betaproteobacteria</taxon>
        <taxon>Burkholderiales</taxon>
        <taxon>Comamonadaceae</taxon>
        <taxon>Rhodoferax</taxon>
    </lineage>
</organism>